<proteinExistence type="uncertain"/>
<organism>
    <name type="scientific">Saccharomyces cerevisiae (strain ATCC 204508 / S288c)</name>
    <name type="common">Baker's yeast</name>
    <dbReference type="NCBI Taxonomy" id="559292"/>
    <lineage>
        <taxon>Eukaryota</taxon>
        <taxon>Fungi</taxon>
        <taxon>Dikarya</taxon>
        <taxon>Ascomycota</taxon>
        <taxon>Saccharomycotina</taxon>
        <taxon>Saccharomycetes</taxon>
        <taxon>Saccharomycetales</taxon>
        <taxon>Saccharomycetaceae</taxon>
        <taxon>Saccharomyces</taxon>
    </lineage>
</organism>
<keyword id="KW-0472">Membrane</keyword>
<keyword id="KW-0812">Transmembrane</keyword>
<keyword id="KW-1133">Transmembrane helix</keyword>
<accession>P53288</accession>
<evidence type="ECO:0000255" key="1"/>
<evidence type="ECO:0000256" key="2">
    <source>
        <dbReference type="SAM" id="MobiDB-lite"/>
    </source>
</evidence>
<evidence type="ECO:0000305" key="3"/>
<evidence type="ECO:0000305" key="4">
    <source>
    </source>
</evidence>
<reference key="1">
    <citation type="journal article" date="1995" name="Yeast">
        <title>The sequence of a 27 kb segment on the right arm of chromosome VII from Saccharomyces cerevisiae reveals MOL1, NAT2, RPL30B, RSR1, CYS4, PEM1/CHO2, NSR1 genes and ten new open reading frames.</title>
        <authorList>
            <person name="Skala J."/>
            <person name="Nawrocki A."/>
            <person name="Goffeau A."/>
        </authorList>
    </citation>
    <scope>NUCLEOTIDE SEQUENCE [GENOMIC DNA]</scope>
    <source>
        <strain>ATCC 204508 / S288c</strain>
    </source>
</reference>
<reference key="2">
    <citation type="journal article" date="1997" name="Nature">
        <title>The nucleotide sequence of Saccharomyces cerevisiae chromosome VII.</title>
        <authorList>
            <person name="Tettelin H."/>
            <person name="Agostoni-Carbone M.L."/>
            <person name="Albermann K."/>
            <person name="Albers M."/>
            <person name="Arroyo J."/>
            <person name="Backes U."/>
            <person name="Barreiros T."/>
            <person name="Bertani I."/>
            <person name="Bjourson A.J."/>
            <person name="Brueckner M."/>
            <person name="Bruschi C.V."/>
            <person name="Carignani G."/>
            <person name="Castagnoli L."/>
            <person name="Cerdan E."/>
            <person name="Clemente M.L."/>
            <person name="Coblenz A."/>
            <person name="Coglievina M."/>
            <person name="Coissac E."/>
            <person name="Defoor E."/>
            <person name="Del Bino S."/>
            <person name="Delius H."/>
            <person name="Delneri D."/>
            <person name="de Wergifosse P."/>
            <person name="Dujon B."/>
            <person name="Durand P."/>
            <person name="Entian K.-D."/>
            <person name="Eraso P."/>
            <person name="Escribano V."/>
            <person name="Fabiani L."/>
            <person name="Fartmann B."/>
            <person name="Feroli F."/>
            <person name="Feuermann M."/>
            <person name="Frontali L."/>
            <person name="Garcia-Gonzalez M."/>
            <person name="Garcia-Saez M.I."/>
            <person name="Goffeau A."/>
            <person name="Guerreiro P."/>
            <person name="Hani J."/>
            <person name="Hansen M."/>
            <person name="Hebling U."/>
            <person name="Hernandez K."/>
            <person name="Heumann K."/>
            <person name="Hilger F."/>
            <person name="Hofmann B."/>
            <person name="Indge K.J."/>
            <person name="James C.M."/>
            <person name="Klima R."/>
            <person name="Koetter P."/>
            <person name="Kramer B."/>
            <person name="Kramer W."/>
            <person name="Lauquin G."/>
            <person name="Leuther H."/>
            <person name="Louis E.J."/>
            <person name="Maillier E."/>
            <person name="Marconi A."/>
            <person name="Martegani E."/>
            <person name="Mazon M.J."/>
            <person name="Mazzoni C."/>
            <person name="McReynolds A.D.K."/>
            <person name="Melchioretto P."/>
            <person name="Mewes H.-W."/>
            <person name="Minenkova O."/>
            <person name="Mueller-Auer S."/>
            <person name="Nawrocki A."/>
            <person name="Netter P."/>
            <person name="Neu R."/>
            <person name="Nombela C."/>
            <person name="Oliver S.G."/>
            <person name="Panzeri L."/>
            <person name="Paoluzi S."/>
            <person name="Plevani P."/>
            <person name="Portetelle D."/>
            <person name="Portillo F."/>
            <person name="Potier S."/>
            <person name="Purnelle B."/>
            <person name="Rieger M."/>
            <person name="Riles L."/>
            <person name="Rinaldi T."/>
            <person name="Robben J."/>
            <person name="Rodrigues-Pousada C."/>
            <person name="Rodriguez-Belmonte E."/>
            <person name="Rodriguez-Torres A.M."/>
            <person name="Rose M."/>
            <person name="Ruzzi M."/>
            <person name="Saliola M."/>
            <person name="Sanchez-Perez M."/>
            <person name="Schaefer B."/>
            <person name="Schaefer M."/>
            <person name="Scharfe M."/>
            <person name="Schmidheini T."/>
            <person name="Schreer A."/>
            <person name="Skala J."/>
            <person name="Souciet J.-L."/>
            <person name="Steensma H.Y."/>
            <person name="Talla E."/>
            <person name="Thierry A."/>
            <person name="Vandenbol M."/>
            <person name="van der Aart Q.J.M."/>
            <person name="Van Dyck L."/>
            <person name="Vanoni M."/>
            <person name="Verhasselt P."/>
            <person name="Voet M."/>
            <person name="Volckaert G."/>
            <person name="Wambutt R."/>
            <person name="Watson M.D."/>
            <person name="Weber N."/>
            <person name="Wedler E."/>
            <person name="Wedler H."/>
            <person name="Wipfli P."/>
            <person name="Wolf K."/>
            <person name="Wright L.F."/>
            <person name="Zaccaria P."/>
            <person name="Zimmermann M."/>
            <person name="Zollner A."/>
            <person name="Kleine K."/>
        </authorList>
    </citation>
    <scope>NUCLEOTIDE SEQUENCE [LARGE SCALE GENOMIC DNA]</scope>
    <source>
        <strain>ATCC 204508 / S288c</strain>
    </source>
</reference>
<reference key="3">
    <citation type="journal article" date="2014" name="G3 (Bethesda)">
        <title>The reference genome sequence of Saccharomyces cerevisiae: Then and now.</title>
        <authorList>
            <person name="Engel S.R."/>
            <person name="Dietrich F.S."/>
            <person name="Fisk D.G."/>
            <person name="Binkley G."/>
            <person name="Balakrishnan R."/>
            <person name="Costanzo M.C."/>
            <person name="Dwight S.S."/>
            <person name="Hitz B.C."/>
            <person name="Karra K."/>
            <person name="Nash R.S."/>
            <person name="Weng S."/>
            <person name="Wong E.D."/>
            <person name="Lloyd P."/>
            <person name="Skrzypek M.S."/>
            <person name="Miyasato S.R."/>
            <person name="Simison M."/>
            <person name="Cherry J.M."/>
        </authorList>
    </citation>
    <scope>GENOME REANNOTATION</scope>
    <source>
        <strain>ATCC 204508 / S288c</strain>
    </source>
</reference>
<reference key="4">
    <citation type="journal article" date="2007" name="Genome Res.">
        <title>Approaching a complete repository of sequence-verified protein-encoding clones for Saccharomyces cerevisiae.</title>
        <authorList>
            <person name="Hu Y."/>
            <person name="Rolfs A."/>
            <person name="Bhullar B."/>
            <person name="Murthy T.V.S."/>
            <person name="Zhu C."/>
            <person name="Berger M.F."/>
            <person name="Camargo A.A."/>
            <person name="Kelley F."/>
            <person name="McCarron S."/>
            <person name="Jepson D."/>
            <person name="Richardson A."/>
            <person name="Raphael J."/>
            <person name="Moreira D."/>
            <person name="Taycher E."/>
            <person name="Zuo D."/>
            <person name="Mohr S."/>
            <person name="Kane M.F."/>
            <person name="Williamson J."/>
            <person name="Simpson A.J.G."/>
            <person name="Bulyk M.L."/>
            <person name="Harlow E."/>
            <person name="Marsischky G."/>
            <person name="Kolodner R.D."/>
            <person name="LaBaer J."/>
        </authorList>
    </citation>
    <scope>NUCLEOTIDE SEQUENCE [GENOMIC DNA]</scope>
    <source>
        <strain>ATCC 204508 / S288c</strain>
    </source>
</reference>
<reference key="5">
    <citation type="journal article" date="1997" name="Yeast">
        <title>Sequence analysis of 203 kilobases from Saccharomyces cerevisiae chromosome VII.</title>
        <authorList>
            <person name="Rieger M."/>
            <person name="Brueckner M."/>
            <person name="Schaefer M."/>
            <person name="Mueller-Auer S."/>
        </authorList>
    </citation>
    <scope>NUCLEOTIDE SEQUENCE [GENOMIC DNA] OF 7-203</scope>
    <source>
        <strain>ATCC 204508 / S288c</strain>
    </source>
</reference>
<name>YG3R_YEAST</name>
<dbReference type="EMBL" id="Z72944">
    <property type="protein sequence ID" value="CAA97174.1"/>
    <property type="molecule type" value="Genomic_DNA"/>
</dbReference>
<dbReference type="EMBL" id="Z72946">
    <property type="protein sequence ID" value="CAA97181.1"/>
    <property type="molecule type" value="Genomic_DNA"/>
</dbReference>
<dbReference type="EMBL" id="AY693314">
    <property type="protein sequence ID" value="AAT93333.1"/>
    <property type="molecule type" value="Genomic_DNA"/>
</dbReference>
<dbReference type="EMBL" id="X85807">
    <property type="protein sequence ID" value="CAA59816.1"/>
    <property type="molecule type" value="Genomic_DNA"/>
</dbReference>
<dbReference type="PIR" id="S60449">
    <property type="entry name" value="S60449"/>
</dbReference>
<dbReference type="SMR" id="P53288"/>
<dbReference type="DIP" id="DIP-1310N"/>
<dbReference type="IntAct" id="P53288">
    <property type="interactions" value="2"/>
</dbReference>
<dbReference type="MINT" id="P53288"/>
<dbReference type="STRING" id="4932.YGR160W"/>
<dbReference type="PaxDb" id="4932-YGR160W"/>
<dbReference type="EnsemblFungi" id="YGR160W_mRNA">
    <property type="protein sequence ID" value="YGR160W"/>
    <property type="gene ID" value="YGR160W"/>
</dbReference>
<dbReference type="AGR" id="SGD:S000003392"/>
<dbReference type="SGD" id="S000003392">
    <property type="gene designation" value="YGR160W"/>
</dbReference>
<dbReference type="eggNOG" id="ENOG502ST6A">
    <property type="taxonomic scope" value="Eukaryota"/>
</dbReference>
<dbReference type="HOGENOM" id="CLU_1277509_0_0_1"/>
<dbReference type="OMA" id="ILFYPAW"/>
<dbReference type="GO" id="GO:0016020">
    <property type="term" value="C:membrane"/>
    <property type="evidence" value="ECO:0007669"/>
    <property type="project" value="UniProtKB-SubCell"/>
</dbReference>
<protein>
    <recommendedName>
        <fullName>Putative uncharacterized protein YGR160W</fullName>
    </recommendedName>
</protein>
<feature type="chain" id="PRO_0000202834" description="Putative uncharacterized protein YGR160W">
    <location>
        <begin position="1"/>
        <end position="203"/>
    </location>
</feature>
<feature type="transmembrane region" description="Helical" evidence="1">
    <location>
        <begin position="182"/>
        <end position="202"/>
    </location>
</feature>
<feature type="region of interest" description="Disordered" evidence="2">
    <location>
        <begin position="65"/>
        <end position="84"/>
    </location>
</feature>
<feature type="region of interest" description="Disordered" evidence="2">
    <location>
        <begin position="92"/>
        <end position="170"/>
    </location>
</feature>
<feature type="compositionally biased region" description="Acidic residues" evidence="2">
    <location>
        <begin position="68"/>
        <end position="82"/>
    </location>
</feature>
<feature type="compositionally biased region" description="Acidic residues" evidence="2">
    <location>
        <begin position="98"/>
        <end position="110"/>
    </location>
</feature>
<feature type="compositionally biased region" description="Low complexity" evidence="2">
    <location>
        <begin position="111"/>
        <end position="122"/>
    </location>
</feature>
<feature type="compositionally biased region" description="Acidic residues" evidence="2">
    <location>
        <begin position="123"/>
        <end position="168"/>
    </location>
</feature>
<gene>
    <name type="ordered locus">YGR160W</name>
    <name type="ORF">G7004</name>
</gene>
<sequence length="203" mass="22179">MTPPMCSNSFFNHSSSIDHDSLPTKIVAGSSVSSFFCFLLEDSSSSSSSASSDLRFLSLDSSFSLSLSEDEDEDESELEDSFDSSFLVSSFSSSSSSSEEESEEEEEESLDSSFLVSASLSLSEDDEEEDSESEDEDEDEDSDSDSDSDSDSDEDEDEDEDSEEEEETALAFSSLACLEALTSFLLPFTLVVLAILFYPAWVE</sequence>
<comment type="subcellular location">
    <subcellularLocation>
        <location evidence="3">Membrane</location>
        <topology evidence="3">Single-pass membrane protein</topology>
    </subcellularLocation>
</comment>
<comment type="miscellaneous">
    <text evidence="3">Almost completely overlaps NSR1.</text>
</comment>
<comment type="caution">
    <text evidence="4">Product of a dubious gene prediction unlikely to encode a functional protein. Because of that it is not part of the S.cerevisiae S288c complete/reference proteome set.</text>
</comment>